<proteinExistence type="inferred from homology"/>
<gene>
    <name evidence="4" type="primary">ccmO</name>
    <name type="ordered locus">slr0436</name>
</gene>
<accession>Q55121</accession>
<reference key="1">
    <citation type="journal article" date="1995" name="DNA Res.">
        <title>Sequence analysis of the genome of the unicellular cyanobacterium Synechocystis sp. strain PCC6803. I. Sequence features in the 1 Mb region from map positions 64% to 92% of the genome.</title>
        <authorList>
            <person name="Kaneko T."/>
            <person name="Tanaka A."/>
            <person name="Sato S."/>
            <person name="Kotani H."/>
            <person name="Sazuka T."/>
            <person name="Miyajima N."/>
            <person name="Sugiura M."/>
            <person name="Tabata S."/>
        </authorList>
    </citation>
    <scope>NUCLEOTIDE SEQUENCE [LARGE SCALE GENOMIC DNA]</scope>
    <source>
        <strain>ATCC 27184 / PCC 6803 / N-1</strain>
    </source>
</reference>
<reference key="2">
    <citation type="journal article" date="1996" name="DNA Res.">
        <title>Sequence analysis of the genome of the unicellular cyanobacterium Synechocystis sp. strain PCC6803. II. Sequence determination of the entire genome and assignment of potential protein-coding regions.</title>
        <authorList>
            <person name="Kaneko T."/>
            <person name="Sato S."/>
            <person name="Kotani H."/>
            <person name="Tanaka A."/>
            <person name="Asamizu E."/>
            <person name="Nakamura Y."/>
            <person name="Miyajima N."/>
            <person name="Hirosawa M."/>
            <person name="Sugiura M."/>
            <person name="Sasamoto S."/>
            <person name="Kimura T."/>
            <person name="Hosouchi T."/>
            <person name="Matsuno A."/>
            <person name="Muraki A."/>
            <person name="Nakazaki N."/>
            <person name="Naruo K."/>
            <person name="Okumura S."/>
            <person name="Shimpo S."/>
            <person name="Takeuchi C."/>
            <person name="Wada T."/>
            <person name="Watanabe A."/>
            <person name="Yamada M."/>
            <person name="Yasuda M."/>
            <person name="Tabata S."/>
        </authorList>
    </citation>
    <scope>NUCLEOTIDE SEQUENCE [LARGE SCALE GENOMIC DNA]</scope>
    <source>
        <strain>ATCC 27184 / PCC 6803 / Kazusa</strain>
    </source>
</reference>
<sequence>MPTSPTMTSVPIARSPRPSYQQINQHQPSDSALGLVSTRSFPAIVGTADMMLKSSQVTLVGYEKIGSGYCTAVVRGKVADVRLAVEEGARTAEQFGQLVSKLVIPRPMPNLQAVFPIGSHLVELAQQQRGYSRLSNRSIGLLETRGFPAMVGAADAMLKSADVQLASYEIIGDGLCTAIVRGTVANVAMAIEVGMQEAERIGELHAVMIIPRLLEDLEHTLPVATYWLDENEPLPMLLPNQVREKQRQLVALPELEKAVVPQRQAKPLPLQEKTEAPLVLEKEAEKPIVEVLGPEID</sequence>
<name>CCMO_SYNY3</name>
<comment type="function">
    <text evidence="1">Required for formation of the carboxysome, a polyhedral inclusion where RuBisCO (ribulose bisphosphate carboxylase, rbcL-rbcS) is sequestered. Required for recruitment of major shell protein CcmK2 to the pre-carboxysome. Suggested to be a carboxysome shell protein.</text>
</comment>
<comment type="subunit">
    <text evidence="1">Homooligomerizes, possibly as a trimer, interacts with CcmK in the carboxysome.</text>
</comment>
<comment type="subcellular location">
    <subcellularLocation>
        <location evidence="1">Carboxysome</location>
    </subcellularLocation>
    <text evidence="4">This cyanobacterium makes beta-type carboxysomes.</text>
</comment>
<comment type="domain">
    <text evidence="1">Has 2 BMC domains, is thought to trimerize giving a hexamer that may interact with CcmK proteins in the carboxysome shell.</text>
</comment>
<comment type="similarity">
    <text evidence="2">Belongs to the bacterial microcompartments protein family.</text>
</comment>
<protein>
    <recommendedName>
        <fullName evidence="4">Carboxysome assembly protein CcmO</fullName>
    </recommendedName>
    <alternativeName>
        <fullName>Carbon dioxide concentrating mechanism protein CcmO</fullName>
    </alternativeName>
</protein>
<organism>
    <name type="scientific">Synechocystis sp. (strain ATCC 27184 / PCC 6803 / Kazusa)</name>
    <dbReference type="NCBI Taxonomy" id="1111708"/>
    <lineage>
        <taxon>Bacteria</taxon>
        <taxon>Bacillati</taxon>
        <taxon>Cyanobacteriota</taxon>
        <taxon>Cyanophyceae</taxon>
        <taxon>Synechococcales</taxon>
        <taxon>Merismopediaceae</taxon>
        <taxon>Synechocystis</taxon>
    </lineage>
</organism>
<evidence type="ECO:0000250" key="1">
    <source>
        <dbReference type="UniProtKB" id="P46205"/>
    </source>
</evidence>
<evidence type="ECO:0000255" key="2">
    <source>
        <dbReference type="PROSITE-ProRule" id="PRU01278"/>
    </source>
</evidence>
<evidence type="ECO:0000256" key="3">
    <source>
        <dbReference type="SAM" id="MobiDB-lite"/>
    </source>
</evidence>
<evidence type="ECO:0000305" key="4"/>
<keyword id="KW-1283">Bacterial microcompartment</keyword>
<keyword id="KW-0120">Carbon dioxide fixation</keyword>
<keyword id="KW-1282">Carboxysome</keyword>
<keyword id="KW-0602">Photosynthesis</keyword>
<keyword id="KW-1185">Reference proteome</keyword>
<keyword id="KW-0677">Repeat</keyword>
<dbReference type="EMBL" id="BA000022">
    <property type="protein sequence ID" value="BAA10253.1"/>
    <property type="molecule type" value="Genomic_DNA"/>
</dbReference>
<dbReference type="PIR" id="S74335">
    <property type="entry name" value="S74335"/>
</dbReference>
<dbReference type="SMR" id="Q55121"/>
<dbReference type="IntAct" id="Q55121">
    <property type="interactions" value="2"/>
</dbReference>
<dbReference type="STRING" id="1148.gene:10499752"/>
<dbReference type="PaxDb" id="1148-1001114"/>
<dbReference type="EnsemblBacteria" id="BAA10253">
    <property type="protein sequence ID" value="BAA10253"/>
    <property type="gene ID" value="BAA10253"/>
</dbReference>
<dbReference type="KEGG" id="syn:slr0436"/>
<dbReference type="eggNOG" id="COG4577">
    <property type="taxonomic scope" value="Bacteria"/>
</dbReference>
<dbReference type="InParanoid" id="Q55121"/>
<dbReference type="Proteomes" id="UP000001425">
    <property type="component" value="Chromosome"/>
</dbReference>
<dbReference type="GO" id="GO:0031470">
    <property type="term" value="C:carboxysome"/>
    <property type="evidence" value="ECO:0007669"/>
    <property type="project" value="UniProtKB-SubCell"/>
</dbReference>
<dbReference type="GO" id="GO:0043886">
    <property type="term" value="F:structural constituent of carboxysome shell"/>
    <property type="evidence" value="ECO:0007669"/>
    <property type="project" value="UniProtKB-ARBA"/>
</dbReference>
<dbReference type="GO" id="GO:0015977">
    <property type="term" value="P:carbon fixation"/>
    <property type="evidence" value="ECO:0007669"/>
    <property type="project" value="UniProtKB-KW"/>
</dbReference>
<dbReference type="GO" id="GO:0015979">
    <property type="term" value="P:photosynthesis"/>
    <property type="evidence" value="ECO:0007669"/>
    <property type="project" value="UniProtKB-KW"/>
</dbReference>
<dbReference type="CDD" id="cd07057">
    <property type="entry name" value="BMC_CcmK"/>
    <property type="match status" value="2"/>
</dbReference>
<dbReference type="Gene3D" id="3.30.70.1710">
    <property type="match status" value="2"/>
</dbReference>
<dbReference type="InterPro" id="IPR020808">
    <property type="entry name" value="Bact_microcomp_CS"/>
</dbReference>
<dbReference type="InterPro" id="IPR000249">
    <property type="entry name" value="BMC_dom"/>
</dbReference>
<dbReference type="InterPro" id="IPR050575">
    <property type="entry name" value="BMC_shell"/>
</dbReference>
<dbReference type="InterPro" id="IPR037233">
    <property type="entry name" value="CcmK-like_sf"/>
</dbReference>
<dbReference type="InterPro" id="IPR044872">
    <property type="entry name" value="CcmK/CsoS1_BMC"/>
</dbReference>
<dbReference type="PANTHER" id="PTHR33941:SF11">
    <property type="entry name" value="BACTERIAL MICROCOMPARTMENT SHELL PROTEIN PDUJ"/>
    <property type="match status" value="1"/>
</dbReference>
<dbReference type="PANTHER" id="PTHR33941">
    <property type="entry name" value="PROPANEDIOL UTILIZATION PROTEIN PDUA"/>
    <property type="match status" value="1"/>
</dbReference>
<dbReference type="Pfam" id="PF00936">
    <property type="entry name" value="BMC"/>
    <property type="match status" value="2"/>
</dbReference>
<dbReference type="SMART" id="SM00877">
    <property type="entry name" value="BMC"/>
    <property type="match status" value="2"/>
</dbReference>
<dbReference type="SUPFAM" id="SSF143414">
    <property type="entry name" value="CcmK-like"/>
    <property type="match status" value="2"/>
</dbReference>
<dbReference type="PROSITE" id="PS01139">
    <property type="entry name" value="BMC_1"/>
    <property type="match status" value="2"/>
</dbReference>
<dbReference type="PROSITE" id="PS51930">
    <property type="entry name" value="BMC_2"/>
    <property type="match status" value="2"/>
</dbReference>
<feature type="chain" id="PRO_0000201515" description="Carboxysome assembly protein CcmO">
    <location>
        <begin position="1"/>
        <end position="297"/>
    </location>
</feature>
<feature type="domain" description="BMC 1" evidence="2">
    <location>
        <begin position="32"/>
        <end position="116"/>
    </location>
</feature>
<feature type="domain" description="BMC 2" evidence="2">
    <location>
        <begin position="138"/>
        <end position="222"/>
    </location>
</feature>
<feature type="region of interest" description="Disordered" evidence="3">
    <location>
        <begin position="1"/>
        <end position="29"/>
    </location>
</feature>
<feature type="compositionally biased region" description="Polar residues" evidence="3">
    <location>
        <begin position="18"/>
        <end position="29"/>
    </location>
</feature>